<protein>
    <recommendedName>
        <fullName>Ankyrin repeat and SOCS box protein 8</fullName>
        <shortName>ASB-8</shortName>
    </recommendedName>
</protein>
<comment type="function">
    <text evidence="2">May be a substrate-recognition component of a SCF-like ECS (Elongin-Cullin-SOCS-box protein) E3 ubiquitin-protein ligase complex which mediates the ubiquitination and subsequent proteasomal degradation of target proteins. Inhibits IFN-beta production through the IRF3 signaling pathway by targeting TBK1 via 'Lys-48'-linked ubiquitination, leading to its proteasomal degradation.</text>
</comment>
<comment type="pathway">
    <text>Protein modification; protein ubiquitination.</text>
</comment>
<comment type="subunit">
    <text evidence="2">Interacts with TBK1; this interaction promotes TBK1 proteasomal degradation.</text>
</comment>
<comment type="subcellular location">
    <subcellularLocation>
        <location evidence="2">Cytoplasm</location>
    </subcellularLocation>
</comment>
<comment type="domain">
    <text evidence="1">The SOCS box domain mediates the interaction with the Elongin BC complex, an adapter module in different E3 ubiquitin-protein ligase complexes.</text>
</comment>
<comment type="PTM">
    <text evidence="2">Phosphorylated by TBK1.</text>
</comment>
<comment type="similarity">
    <text evidence="4">Belongs to the ankyrin SOCS box (ASB) family.</text>
</comment>
<dbReference type="EMBL" id="CR860554">
    <property type="protein sequence ID" value="CAH92679.1"/>
    <property type="molecule type" value="mRNA"/>
</dbReference>
<dbReference type="RefSeq" id="NP_001126569.1">
    <property type="nucleotide sequence ID" value="NM_001133097.1"/>
</dbReference>
<dbReference type="RefSeq" id="XP_024112015.1">
    <property type="nucleotide sequence ID" value="XM_024256247.3"/>
</dbReference>
<dbReference type="RefSeq" id="XP_063567672.1">
    <property type="nucleotide sequence ID" value="XM_063711602.1"/>
</dbReference>
<dbReference type="SMR" id="Q5R6D7"/>
<dbReference type="FunCoup" id="Q5R6D7">
    <property type="interactions" value="651"/>
</dbReference>
<dbReference type="STRING" id="9601.ENSPPYP00000005086"/>
<dbReference type="Ensembl" id="ENSPPYT00000055135.1">
    <property type="protein sequence ID" value="ENSPPYP00000033857.1"/>
    <property type="gene ID" value="ENSPPYG00000038698.1"/>
</dbReference>
<dbReference type="GeneID" id="100173560"/>
<dbReference type="KEGG" id="pon:100173560"/>
<dbReference type="CTD" id="140461"/>
<dbReference type="eggNOG" id="KOG0504">
    <property type="taxonomic scope" value="Eukaryota"/>
</dbReference>
<dbReference type="GeneTree" id="ENSGT00940000159366"/>
<dbReference type="InParanoid" id="Q5R6D7"/>
<dbReference type="OMA" id="NCMHGIL"/>
<dbReference type="OrthoDB" id="10258888at2759"/>
<dbReference type="UniPathway" id="UPA00143"/>
<dbReference type="Proteomes" id="UP000001595">
    <property type="component" value="Chromosome 12"/>
</dbReference>
<dbReference type="GO" id="GO:0005737">
    <property type="term" value="C:cytoplasm"/>
    <property type="evidence" value="ECO:0007669"/>
    <property type="project" value="UniProtKB-SubCell"/>
</dbReference>
<dbReference type="GO" id="GO:0035556">
    <property type="term" value="P:intracellular signal transduction"/>
    <property type="evidence" value="ECO:0007669"/>
    <property type="project" value="InterPro"/>
</dbReference>
<dbReference type="GO" id="GO:0016567">
    <property type="term" value="P:protein ubiquitination"/>
    <property type="evidence" value="ECO:0007669"/>
    <property type="project" value="UniProtKB-UniPathway"/>
</dbReference>
<dbReference type="CDD" id="cd03727">
    <property type="entry name" value="SOCS_ASB8"/>
    <property type="match status" value="1"/>
</dbReference>
<dbReference type="FunFam" id="1.10.750.20:FF:000001">
    <property type="entry name" value="Ankyrin repeat and SOCS box containing 1"/>
    <property type="match status" value="1"/>
</dbReference>
<dbReference type="FunFam" id="1.25.40.20:FF:000274">
    <property type="entry name" value="Ankyrin repeat and SOCS box containing 8"/>
    <property type="match status" value="1"/>
</dbReference>
<dbReference type="FunFam" id="1.25.40.20:FF:000303">
    <property type="entry name" value="Ankyrin repeat and SOCS box containing 8"/>
    <property type="match status" value="1"/>
</dbReference>
<dbReference type="Gene3D" id="1.25.40.20">
    <property type="entry name" value="Ankyrin repeat-containing domain"/>
    <property type="match status" value="2"/>
</dbReference>
<dbReference type="Gene3D" id="1.10.750.20">
    <property type="entry name" value="SOCS box"/>
    <property type="match status" value="1"/>
</dbReference>
<dbReference type="InterPro" id="IPR002110">
    <property type="entry name" value="Ankyrin_rpt"/>
</dbReference>
<dbReference type="InterPro" id="IPR036770">
    <property type="entry name" value="Ankyrin_rpt-contain_sf"/>
</dbReference>
<dbReference type="InterPro" id="IPR037332">
    <property type="entry name" value="ASB8_SOCS"/>
</dbReference>
<dbReference type="InterPro" id="IPR001496">
    <property type="entry name" value="SOCS_box"/>
</dbReference>
<dbReference type="InterPro" id="IPR036036">
    <property type="entry name" value="SOCS_box-like_dom_sf"/>
</dbReference>
<dbReference type="PANTHER" id="PTHR24134:SF9">
    <property type="entry name" value="ANKYRIN REPEAT AND SOCS BOX PROTEIN 8"/>
    <property type="match status" value="1"/>
</dbReference>
<dbReference type="PANTHER" id="PTHR24134">
    <property type="entry name" value="ANKYRIN REPEAT-CONTAINING PROTEIN DDB_G0279043"/>
    <property type="match status" value="1"/>
</dbReference>
<dbReference type="Pfam" id="PF12796">
    <property type="entry name" value="Ank_2"/>
    <property type="match status" value="1"/>
</dbReference>
<dbReference type="Pfam" id="PF13637">
    <property type="entry name" value="Ank_4"/>
    <property type="match status" value="1"/>
</dbReference>
<dbReference type="Pfam" id="PF07525">
    <property type="entry name" value="SOCS_box"/>
    <property type="match status" value="1"/>
</dbReference>
<dbReference type="SMART" id="SM00248">
    <property type="entry name" value="ANK"/>
    <property type="match status" value="4"/>
</dbReference>
<dbReference type="SMART" id="SM00969">
    <property type="entry name" value="SOCS_box"/>
    <property type="match status" value="1"/>
</dbReference>
<dbReference type="SUPFAM" id="SSF48403">
    <property type="entry name" value="Ankyrin repeat"/>
    <property type="match status" value="1"/>
</dbReference>
<dbReference type="SUPFAM" id="SSF158235">
    <property type="entry name" value="SOCS box-like"/>
    <property type="match status" value="1"/>
</dbReference>
<dbReference type="PROSITE" id="PS50297">
    <property type="entry name" value="ANK_REP_REGION"/>
    <property type="match status" value="1"/>
</dbReference>
<dbReference type="PROSITE" id="PS50088">
    <property type="entry name" value="ANK_REPEAT"/>
    <property type="match status" value="4"/>
</dbReference>
<dbReference type="PROSITE" id="PS50225">
    <property type="entry name" value="SOCS"/>
    <property type="match status" value="1"/>
</dbReference>
<organism>
    <name type="scientific">Pongo abelii</name>
    <name type="common">Sumatran orangutan</name>
    <name type="synonym">Pongo pygmaeus abelii</name>
    <dbReference type="NCBI Taxonomy" id="9601"/>
    <lineage>
        <taxon>Eukaryota</taxon>
        <taxon>Metazoa</taxon>
        <taxon>Chordata</taxon>
        <taxon>Craniata</taxon>
        <taxon>Vertebrata</taxon>
        <taxon>Euteleostomi</taxon>
        <taxon>Mammalia</taxon>
        <taxon>Eutheria</taxon>
        <taxon>Euarchontoglires</taxon>
        <taxon>Primates</taxon>
        <taxon>Haplorrhini</taxon>
        <taxon>Catarrhini</taxon>
        <taxon>Hominidae</taxon>
        <taxon>Pongo</taxon>
    </lineage>
</organism>
<accession>Q5R6D7</accession>
<feature type="chain" id="PRO_0000284431" description="Ankyrin repeat and SOCS box protein 8">
    <location>
        <begin position="1"/>
        <end position="288"/>
    </location>
</feature>
<feature type="repeat" description="ANK 1">
    <location>
        <begin position="52"/>
        <end position="81"/>
    </location>
</feature>
<feature type="repeat" description="ANK 2">
    <location>
        <begin position="85"/>
        <end position="113"/>
    </location>
</feature>
<feature type="repeat" description="ANK 3">
    <location>
        <begin position="117"/>
        <end position="146"/>
    </location>
</feature>
<feature type="repeat" description="ANK 4">
    <location>
        <begin position="150"/>
        <end position="179"/>
    </location>
</feature>
<feature type="domain" description="SOCS box" evidence="3">
    <location>
        <begin position="235"/>
        <end position="288"/>
    </location>
</feature>
<feature type="modified residue" description="Phosphoserine" evidence="2">
    <location>
        <position position="17"/>
    </location>
</feature>
<reference key="1">
    <citation type="submission" date="2004-11" db="EMBL/GenBank/DDBJ databases">
        <authorList>
            <consortium name="The German cDNA consortium"/>
        </authorList>
    </citation>
    <scope>NUCLEOTIDE SEQUENCE [LARGE SCALE MRNA]</scope>
    <source>
        <tissue>Brain cortex</tissue>
    </source>
</reference>
<gene>
    <name type="primary">ASB8</name>
</gene>
<sequence>MSSSMWYIMQSIQSKYSLSERLIRTIAAIRSFPHDNVEDLIRGGADVNCTHGTLKPLHCACMVSDADCVELLLEKGAEVNALDGYNRTALHYAAEKDEACVEVLLEYGANPNALDGNRDTPLHWAAFKNNAECVRALLESGASVNALDYNNDTPLSWAAMKGNLESVSILLDYGAEVRVINLIGQTPISRLVALLVRGLGTEKEDSCFELLHRAVGHFELRKNGTMPREVARDPQLCEKLTVLCSAPGTLKTLARYTVRRSLGLQYLPDAVKGLPLPASLKEYLLLLE</sequence>
<evidence type="ECO:0000250" key="1"/>
<evidence type="ECO:0000250" key="2">
    <source>
        <dbReference type="UniProtKB" id="Q9H765"/>
    </source>
</evidence>
<evidence type="ECO:0000255" key="3">
    <source>
        <dbReference type="PROSITE-ProRule" id="PRU00194"/>
    </source>
</evidence>
<evidence type="ECO:0000305" key="4"/>
<proteinExistence type="evidence at transcript level"/>
<name>ASB8_PONAB</name>
<keyword id="KW-0040">ANK repeat</keyword>
<keyword id="KW-0963">Cytoplasm</keyword>
<keyword id="KW-0597">Phosphoprotein</keyword>
<keyword id="KW-1185">Reference proteome</keyword>
<keyword id="KW-0677">Repeat</keyword>
<keyword id="KW-0833">Ubl conjugation pathway</keyword>